<organism>
    <name type="scientific">Arabidopsis thaliana</name>
    <name type="common">Mouse-ear cress</name>
    <dbReference type="NCBI Taxonomy" id="3702"/>
    <lineage>
        <taxon>Eukaryota</taxon>
        <taxon>Viridiplantae</taxon>
        <taxon>Streptophyta</taxon>
        <taxon>Embryophyta</taxon>
        <taxon>Tracheophyta</taxon>
        <taxon>Spermatophyta</taxon>
        <taxon>Magnoliopsida</taxon>
        <taxon>eudicotyledons</taxon>
        <taxon>Gunneridae</taxon>
        <taxon>Pentapetalae</taxon>
        <taxon>rosids</taxon>
        <taxon>malvids</taxon>
        <taxon>Brassicales</taxon>
        <taxon>Brassicaceae</taxon>
        <taxon>Camelineae</taxon>
        <taxon>Arabidopsis</taxon>
    </lineage>
</organism>
<dbReference type="EC" id="3.1.2.4"/>
<dbReference type="EMBL" id="AC002340">
    <property type="protein sequence ID" value="AAC02736.1"/>
    <property type="status" value="ALT_SEQ"/>
    <property type="molecule type" value="Genomic_DNA"/>
</dbReference>
<dbReference type="EMBL" id="CP002685">
    <property type="protein sequence ID" value="AEC08423.1"/>
    <property type="molecule type" value="Genomic_DNA"/>
</dbReference>
<dbReference type="EMBL" id="DQ446582">
    <property type="protein sequence ID" value="ABE65876.1"/>
    <property type="molecule type" value="mRNA"/>
</dbReference>
<dbReference type="PIR" id="A84711">
    <property type="entry name" value="A84711"/>
</dbReference>
<dbReference type="RefSeq" id="NP_180623.3">
    <property type="nucleotide sequence ID" value="NM_128617.4"/>
</dbReference>
<dbReference type="SMR" id="Q1PEY5"/>
<dbReference type="FunCoup" id="Q1PEY5">
    <property type="interactions" value="2538"/>
</dbReference>
<dbReference type="STRING" id="3702.Q1PEY5"/>
<dbReference type="iPTMnet" id="Q1PEY5"/>
<dbReference type="PaxDb" id="3702-AT2G30650.1"/>
<dbReference type="ProteomicsDB" id="230205"/>
<dbReference type="EnsemblPlants" id="AT2G30650.1">
    <property type="protein sequence ID" value="AT2G30650.1"/>
    <property type="gene ID" value="AT2G30650"/>
</dbReference>
<dbReference type="GeneID" id="817615"/>
<dbReference type="Gramene" id="AT2G30650.1">
    <property type="protein sequence ID" value="AT2G30650.1"/>
    <property type="gene ID" value="AT2G30650"/>
</dbReference>
<dbReference type="KEGG" id="ath:AT2G30650"/>
<dbReference type="Araport" id="AT2G30650"/>
<dbReference type="TAIR" id="AT2G30650"/>
<dbReference type="eggNOG" id="ENOG502RY3N">
    <property type="taxonomic scope" value="Eukaryota"/>
</dbReference>
<dbReference type="HOGENOM" id="CLU_009834_22_1_1"/>
<dbReference type="InParanoid" id="Q1PEY5"/>
<dbReference type="PhylomeDB" id="Q1PEY5"/>
<dbReference type="BioCyc" id="ARA:AT2G30650-MONOMER"/>
<dbReference type="UniPathway" id="UPA00362"/>
<dbReference type="PRO" id="PR:Q1PEY5"/>
<dbReference type="Proteomes" id="UP000006548">
    <property type="component" value="Chromosome 2"/>
</dbReference>
<dbReference type="ExpressionAtlas" id="Q1PEY5">
    <property type="expression patterns" value="baseline and differential"/>
</dbReference>
<dbReference type="GO" id="GO:0005777">
    <property type="term" value="C:peroxisome"/>
    <property type="evidence" value="ECO:0007669"/>
    <property type="project" value="UniProtKB-SubCell"/>
</dbReference>
<dbReference type="GO" id="GO:0003860">
    <property type="term" value="F:3-hydroxyisobutyryl-CoA hydrolase activity"/>
    <property type="evidence" value="ECO:0007669"/>
    <property type="project" value="UniProtKB-EC"/>
</dbReference>
<dbReference type="GO" id="GO:0006574">
    <property type="term" value="P:valine catabolic process"/>
    <property type="evidence" value="ECO:0007669"/>
    <property type="project" value="UniProtKB-UniPathway"/>
</dbReference>
<dbReference type="CDD" id="cd06558">
    <property type="entry name" value="crotonase-like"/>
    <property type="match status" value="1"/>
</dbReference>
<dbReference type="FunFam" id="3.90.226.10:FF:000027">
    <property type="entry name" value="Probable 3-hydroxyisobutyryl-CoA hydrolase 2"/>
    <property type="match status" value="1"/>
</dbReference>
<dbReference type="Gene3D" id="3.90.226.10">
    <property type="entry name" value="2-enoyl-CoA Hydratase, Chain A, domain 1"/>
    <property type="match status" value="1"/>
</dbReference>
<dbReference type="InterPro" id="IPR029045">
    <property type="entry name" value="ClpP/crotonase-like_dom_sf"/>
</dbReference>
<dbReference type="InterPro" id="IPR045004">
    <property type="entry name" value="ECH_dom"/>
</dbReference>
<dbReference type="InterPro" id="IPR032259">
    <property type="entry name" value="HIBYL-CoA-H"/>
</dbReference>
<dbReference type="NCBIfam" id="NF004127">
    <property type="entry name" value="PRK05617.1"/>
    <property type="match status" value="1"/>
</dbReference>
<dbReference type="PANTHER" id="PTHR43176:SF3">
    <property type="entry name" value="3-HYDROXYISOBUTYRYL-COA HYDROLASE, MITOCHONDRIAL"/>
    <property type="match status" value="1"/>
</dbReference>
<dbReference type="PANTHER" id="PTHR43176">
    <property type="entry name" value="3-HYDROXYISOBUTYRYL-COA HYDROLASE-RELATED"/>
    <property type="match status" value="1"/>
</dbReference>
<dbReference type="Pfam" id="PF16113">
    <property type="entry name" value="ECH_2"/>
    <property type="match status" value="1"/>
</dbReference>
<dbReference type="SUPFAM" id="SSF52096">
    <property type="entry name" value="ClpP/crotonase"/>
    <property type="match status" value="1"/>
</dbReference>
<keyword id="KW-0101">Branched-chain amino acid catabolism</keyword>
<keyword id="KW-0378">Hydrolase</keyword>
<keyword id="KW-0576">Peroxisome</keyword>
<keyword id="KW-1185">Reference proteome</keyword>
<sequence length="378" mass="42256">MASHSQVLVEEKSSVRILTFNRPKQLNALSFHMVSRLLQLFLAYEEDPSVKLVVLKGQGRAFSAGGDIPPIVRDILQGKLIRGAHYFKVGYTLNYVLSTYRKPQVSILNGIVMGGGAGLSTNGRFRIATENTVFAMPETALGLFPDVGASYFLSRLPGFFGEYVGLTGARLDGAEMLACGLATHFVPSISLTALEAELYKVGSSNQTFISTILDAYAEYPHLNQHSSYHRLDVIDRCFSKRTVEEIFSALEREVTQKPNDWLLATIQALEKASPSCLKISLRSIREGRLQGVGQCLIREYRMVCHVMKGDISKDFVEGCRAVLIDKDRNPKWQPRRLEDVTDSMVDQYFERVEDEEGWEDLKFPPRNNLPALAIAAKL</sequence>
<feature type="chain" id="PRO_0000392978" description="Probable 3-hydroxyisobutyryl-CoA hydrolase 2">
    <location>
        <begin position="1"/>
        <end position="378"/>
    </location>
</feature>
<feature type="short sequence motif" description="Microbody targeting signal" evidence="2">
    <location>
        <begin position="376"/>
        <end position="378"/>
    </location>
</feature>
<feature type="binding site" evidence="1">
    <location>
        <position position="115"/>
    </location>
    <ligand>
        <name>substrate</name>
    </ligand>
</feature>
<feature type="binding site" evidence="1">
    <location>
        <position position="138"/>
    </location>
    <ligand>
        <name>substrate</name>
    </ligand>
</feature>
<feature type="binding site" evidence="1">
    <location>
        <position position="146"/>
    </location>
    <ligand>
        <name>substrate</name>
    </ligand>
</feature>
<accession>Q1PEY5</accession>
<accession>O49330</accession>
<reference key="1">
    <citation type="journal article" date="1999" name="Nature">
        <title>Sequence and analysis of chromosome 2 of the plant Arabidopsis thaliana.</title>
        <authorList>
            <person name="Lin X."/>
            <person name="Kaul S."/>
            <person name="Rounsley S.D."/>
            <person name="Shea T.P."/>
            <person name="Benito M.-I."/>
            <person name="Town C.D."/>
            <person name="Fujii C.Y."/>
            <person name="Mason T.M."/>
            <person name="Bowman C.L."/>
            <person name="Barnstead M.E."/>
            <person name="Feldblyum T.V."/>
            <person name="Buell C.R."/>
            <person name="Ketchum K.A."/>
            <person name="Lee J.J."/>
            <person name="Ronning C.M."/>
            <person name="Koo H.L."/>
            <person name="Moffat K.S."/>
            <person name="Cronin L.A."/>
            <person name="Shen M."/>
            <person name="Pai G."/>
            <person name="Van Aken S."/>
            <person name="Umayam L."/>
            <person name="Tallon L.J."/>
            <person name="Gill J.E."/>
            <person name="Adams M.D."/>
            <person name="Carrera A.J."/>
            <person name="Creasy T.H."/>
            <person name="Goodman H.M."/>
            <person name="Somerville C.R."/>
            <person name="Copenhaver G.P."/>
            <person name="Preuss D."/>
            <person name="Nierman W.C."/>
            <person name="White O."/>
            <person name="Eisen J.A."/>
            <person name="Salzberg S.L."/>
            <person name="Fraser C.M."/>
            <person name="Venter J.C."/>
        </authorList>
    </citation>
    <scope>NUCLEOTIDE SEQUENCE [LARGE SCALE GENOMIC DNA]</scope>
    <source>
        <strain>cv. Columbia</strain>
    </source>
</reference>
<reference key="2">
    <citation type="journal article" date="2017" name="Plant J.">
        <title>Araport11: a complete reannotation of the Arabidopsis thaliana reference genome.</title>
        <authorList>
            <person name="Cheng C.Y."/>
            <person name="Krishnakumar V."/>
            <person name="Chan A.P."/>
            <person name="Thibaud-Nissen F."/>
            <person name="Schobel S."/>
            <person name="Town C.D."/>
        </authorList>
    </citation>
    <scope>GENOME REANNOTATION</scope>
    <source>
        <strain>cv. Columbia</strain>
    </source>
</reference>
<reference key="3">
    <citation type="journal article" date="2006" name="Plant Biotechnol. J.">
        <title>Simultaneous high-throughput recombinational cloning of open reading frames in closed and open configurations.</title>
        <authorList>
            <person name="Underwood B.A."/>
            <person name="Vanderhaeghen R."/>
            <person name="Whitford R."/>
            <person name="Town C.D."/>
            <person name="Hilson P."/>
        </authorList>
    </citation>
    <scope>NUCLEOTIDE SEQUENCE [LARGE SCALE MRNA]</scope>
    <source>
        <strain>cv. Columbia</strain>
    </source>
</reference>
<reference key="4">
    <citation type="journal article" date="2001" name="J. Biol. Chem.">
        <title>chy1, an Arabidopsis mutant with impaired beta-oxidation, is defective in a peroxisomal beta-hydroxyisobutyryl-CoA hydrolase.</title>
        <authorList>
            <person name="Zolman B.K."/>
            <person name="Monroe-Augustus M."/>
            <person name="Thompson B."/>
            <person name="Hawes J.W."/>
            <person name="Krukenberg K.A."/>
            <person name="Matsuda S.P."/>
            <person name="Bartel B."/>
        </authorList>
    </citation>
    <scope>GENE FAMILY</scope>
</reference>
<proteinExistence type="evidence at transcript level"/>
<comment type="function">
    <text evidence="1">Involved in valine catabolism.</text>
</comment>
<comment type="catalytic activity">
    <reaction>
        <text>3-hydroxy-2-methylpropanoyl-CoA + H2O = 3-hydroxy-2-methylpropanoate + CoA + H(+)</text>
        <dbReference type="Rhea" id="RHEA:20888"/>
        <dbReference type="ChEBI" id="CHEBI:11805"/>
        <dbReference type="ChEBI" id="CHEBI:15377"/>
        <dbReference type="ChEBI" id="CHEBI:15378"/>
        <dbReference type="ChEBI" id="CHEBI:57287"/>
        <dbReference type="ChEBI" id="CHEBI:57340"/>
        <dbReference type="EC" id="3.1.2.4"/>
    </reaction>
</comment>
<comment type="pathway">
    <text>Amino-acid degradation; L-valine degradation.</text>
</comment>
<comment type="subcellular location">
    <subcellularLocation>
        <location evidence="2">Peroxisome</location>
    </subcellularLocation>
</comment>
<comment type="similarity">
    <text evidence="2">Belongs to the enoyl-CoA hydratase/isomerase family.</text>
</comment>
<comment type="sequence caution" evidence="2">
    <conflict type="erroneous gene model prediction">
        <sequence resource="EMBL-CDS" id="AAC02736"/>
    </conflict>
</comment>
<gene>
    <name type="ordered locus">At2g30650</name>
    <name type="ORF">T11J7.4</name>
</gene>
<evidence type="ECO:0000250" key="1"/>
<evidence type="ECO:0000305" key="2"/>
<name>HIBC2_ARATH</name>
<protein>
    <recommendedName>
        <fullName>Probable 3-hydroxyisobutyryl-CoA hydrolase 2</fullName>
        <ecNumber>3.1.2.4</ecNumber>
    </recommendedName>
</protein>